<gene>
    <name evidence="1" type="primary">tsaD</name>
    <name type="synonym">gcp</name>
    <name type="ordered locus">UUR10_0455</name>
</gene>
<evidence type="ECO:0000255" key="1">
    <source>
        <dbReference type="HAMAP-Rule" id="MF_01445"/>
    </source>
</evidence>
<name>TSAD_UREU1</name>
<sequence>MEEKYLILSIESSCDETSLALFENNKLIAHKISSSASAQAFHGGVVPELASRYHEHNINRLFVDILNETKIDPLTITHVAYTAMPGLPGCLHVGKVFAKQLASLINAELVPINHLHAHVFSASIDQELVFPFLGLVVSGGESCLYLVSDYDQIKILNQTQDDAIGECYDKVARILGWNYPGGPIIDKNYQEDLATLEFIKSQPAAKNFSFSGLKTAVINYVHNSKQKKLDFDPIVIASSFQKFAINEVIKKVKYYLDLYQLKRLAIGGGVSANSLLRKKIRDLNVISYIPQMIYTGDNAAMIGAYAYALIKNHKKSILIK</sequence>
<proteinExistence type="inferred from homology"/>
<comment type="function">
    <text evidence="1">Required for the formation of a threonylcarbamoyl group on adenosine at position 37 (t(6)A37) in tRNAs that read codons beginning with adenine. Is involved in the transfer of the threonylcarbamoyl moiety of threonylcarbamoyl-AMP (TC-AMP) to the N6 group of A37, together with TsaE and TsaB. TsaD likely plays a direct catalytic role in this reaction.</text>
</comment>
<comment type="catalytic activity">
    <reaction evidence="1">
        <text>L-threonylcarbamoyladenylate + adenosine(37) in tRNA = N(6)-L-threonylcarbamoyladenosine(37) in tRNA + AMP + H(+)</text>
        <dbReference type="Rhea" id="RHEA:37059"/>
        <dbReference type="Rhea" id="RHEA-COMP:10162"/>
        <dbReference type="Rhea" id="RHEA-COMP:10163"/>
        <dbReference type="ChEBI" id="CHEBI:15378"/>
        <dbReference type="ChEBI" id="CHEBI:73682"/>
        <dbReference type="ChEBI" id="CHEBI:74411"/>
        <dbReference type="ChEBI" id="CHEBI:74418"/>
        <dbReference type="ChEBI" id="CHEBI:456215"/>
        <dbReference type="EC" id="2.3.1.234"/>
    </reaction>
</comment>
<comment type="cofactor">
    <cofactor evidence="1">
        <name>Fe(2+)</name>
        <dbReference type="ChEBI" id="CHEBI:29033"/>
    </cofactor>
    <text evidence="1">Binds 1 Fe(2+) ion per subunit.</text>
</comment>
<comment type="subcellular location">
    <subcellularLocation>
        <location evidence="1">Cytoplasm</location>
    </subcellularLocation>
</comment>
<comment type="similarity">
    <text evidence="1">Belongs to the KAE1 / TsaD family.</text>
</comment>
<accession>B5ZBQ8</accession>
<reference key="1">
    <citation type="submission" date="2008-10" db="EMBL/GenBank/DDBJ databases">
        <title>Genome sequence of Ureaplasma urealyticum serovar 10 ATCC-33699.</title>
        <authorList>
            <person name="Shrivastava S."/>
            <person name="Methe B.A."/>
            <person name="Glass J."/>
            <person name="White K."/>
            <person name="Duffy L.B."/>
        </authorList>
    </citation>
    <scope>NUCLEOTIDE SEQUENCE [LARGE SCALE GENOMIC DNA]</scope>
    <source>
        <strain>ATCC 33699 / Western</strain>
    </source>
</reference>
<feature type="chain" id="PRO_1000146039" description="tRNA N6-adenosine threonylcarbamoyltransferase">
    <location>
        <begin position="1"/>
        <end position="320"/>
    </location>
</feature>
<feature type="binding site" evidence="1">
    <location>
        <position position="114"/>
    </location>
    <ligand>
        <name>Fe cation</name>
        <dbReference type="ChEBI" id="CHEBI:24875"/>
    </ligand>
</feature>
<feature type="binding site" evidence="1">
    <location>
        <position position="118"/>
    </location>
    <ligand>
        <name>Fe cation</name>
        <dbReference type="ChEBI" id="CHEBI:24875"/>
    </ligand>
</feature>
<feature type="binding site" evidence="1">
    <location>
        <begin position="136"/>
        <end position="140"/>
    </location>
    <ligand>
        <name>substrate</name>
    </ligand>
</feature>
<feature type="binding site" evidence="1">
    <location>
        <position position="169"/>
    </location>
    <ligand>
        <name>substrate</name>
    </ligand>
</feature>
<feature type="binding site" evidence="1">
    <location>
        <position position="182"/>
    </location>
    <ligand>
        <name>substrate</name>
    </ligand>
</feature>
<feature type="binding site" evidence="1">
    <location>
        <position position="186"/>
    </location>
    <ligand>
        <name>substrate</name>
    </ligand>
</feature>
<feature type="binding site" evidence="1">
    <location>
        <position position="273"/>
    </location>
    <ligand>
        <name>substrate</name>
    </ligand>
</feature>
<feature type="binding site" evidence="1">
    <location>
        <position position="297"/>
    </location>
    <ligand>
        <name>Fe cation</name>
        <dbReference type="ChEBI" id="CHEBI:24875"/>
    </ligand>
</feature>
<organism>
    <name type="scientific">Ureaplasma urealyticum serovar 10 (strain ATCC 33699 / Western)</name>
    <dbReference type="NCBI Taxonomy" id="565575"/>
    <lineage>
        <taxon>Bacteria</taxon>
        <taxon>Bacillati</taxon>
        <taxon>Mycoplasmatota</taxon>
        <taxon>Mycoplasmoidales</taxon>
        <taxon>Mycoplasmoidaceae</taxon>
        <taxon>Ureaplasma</taxon>
    </lineage>
</organism>
<keyword id="KW-0012">Acyltransferase</keyword>
<keyword id="KW-0963">Cytoplasm</keyword>
<keyword id="KW-0408">Iron</keyword>
<keyword id="KW-0479">Metal-binding</keyword>
<keyword id="KW-0808">Transferase</keyword>
<keyword id="KW-0819">tRNA processing</keyword>
<protein>
    <recommendedName>
        <fullName evidence="1">tRNA N6-adenosine threonylcarbamoyltransferase</fullName>
        <ecNumber evidence="1">2.3.1.234</ecNumber>
    </recommendedName>
    <alternativeName>
        <fullName evidence="1">N6-L-threonylcarbamoyladenine synthase</fullName>
        <shortName evidence="1">t(6)A synthase</shortName>
    </alternativeName>
    <alternativeName>
        <fullName evidence="1">t(6)A37 threonylcarbamoyladenosine biosynthesis protein TsaD</fullName>
    </alternativeName>
    <alternativeName>
        <fullName evidence="1">tRNA threonylcarbamoyladenosine biosynthesis protein TsaD</fullName>
    </alternativeName>
</protein>
<dbReference type="EC" id="2.3.1.234" evidence="1"/>
<dbReference type="EMBL" id="CP001184">
    <property type="protein sequence ID" value="ACI59990.1"/>
    <property type="molecule type" value="Genomic_DNA"/>
</dbReference>
<dbReference type="RefSeq" id="WP_004026205.1">
    <property type="nucleotide sequence ID" value="NC_011374.1"/>
</dbReference>
<dbReference type="SMR" id="B5ZBQ8"/>
<dbReference type="STRING" id="565575.UUR10_0455"/>
<dbReference type="GeneID" id="93848927"/>
<dbReference type="KEGG" id="uue:UUR10_0455"/>
<dbReference type="eggNOG" id="COG0533">
    <property type="taxonomic scope" value="Bacteria"/>
</dbReference>
<dbReference type="HOGENOM" id="CLU_023208_0_1_14"/>
<dbReference type="OrthoDB" id="9806197at2"/>
<dbReference type="Proteomes" id="UP000002018">
    <property type="component" value="Chromosome"/>
</dbReference>
<dbReference type="GO" id="GO:0005737">
    <property type="term" value="C:cytoplasm"/>
    <property type="evidence" value="ECO:0007669"/>
    <property type="project" value="UniProtKB-SubCell"/>
</dbReference>
<dbReference type="GO" id="GO:0005506">
    <property type="term" value="F:iron ion binding"/>
    <property type="evidence" value="ECO:0007669"/>
    <property type="project" value="UniProtKB-UniRule"/>
</dbReference>
<dbReference type="GO" id="GO:0061711">
    <property type="term" value="F:N(6)-L-threonylcarbamoyladenine synthase activity"/>
    <property type="evidence" value="ECO:0007669"/>
    <property type="project" value="UniProtKB-EC"/>
</dbReference>
<dbReference type="GO" id="GO:0002949">
    <property type="term" value="P:tRNA threonylcarbamoyladenosine modification"/>
    <property type="evidence" value="ECO:0007669"/>
    <property type="project" value="UniProtKB-UniRule"/>
</dbReference>
<dbReference type="Gene3D" id="3.30.420.40">
    <property type="match status" value="2"/>
</dbReference>
<dbReference type="HAMAP" id="MF_01445">
    <property type="entry name" value="TsaD"/>
    <property type="match status" value="1"/>
</dbReference>
<dbReference type="InterPro" id="IPR043129">
    <property type="entry name" value="ATPase_NBD"/>
</dbReference>
<dbReference type="InterPro" id="IPR000905">
    <property type="entry name" value="Gcp-like_dom"/>
</dbReference>
<dbReference type="InterPro" id="IPR017861">
    <property type="entry name" value="KAE1/TsaD"/>
</dbReference>
<dbReference type="InterPro" id="IPR022450">
    <property type="entry name" value="TsaD"/>
</dbReference>
<dbReference type="NCBIfam" id="TIGR00329">
    <property type="entry name" value="gcp_kae1"/>
    <property type="match status" value="1"/>
</dbReference>
<dbReference type="NCBIfam" id="TIGR03723">
    <property type="entry name" value="T6A_TsaD_YgjD"/>
    <property type="match status" value="1"/>
</dbReference>
<dbReference type="PANTHER" id="PTHR11735">
    <property type="entry name" value="TRNA N6-ADENOSINE THREONYLCARBAMOYLTRANSFERASE"/>
    <property type="match status" value="1"/>
</dbReference>
<dbReference type="PANTHER" id="PTHR11735:SF6">
    <property type="entry name" value="TRNA N6-ADENOSINE THREONYLCARBAMOYLTRANSFERASE, MITOCHONDRIAL"/>
    <property type="match status" value="1"/>
</dbReference>
<dbReference type="Pfam" id="PF00814">
    <property type="entry name" value="TsaD"/>
    <property type="match status" value="1"/>
</dbReference>
<dbReference type="PRINTS" id="PR00789">
    <property type="entry name" value="OSIALOPTASE"/>
</dbReference>
<dbReference type="SUPFAM" id="SSF53067">
    <property type="entry name" value="Actin-like ATPase domain"/>
    <property type="match status" value="2"/>
</dbReference>